<reference key="1">
    <citation type="journal article" date="2009" name="Appl. Environ. Microbiol.">
        <title>Three genomes from the phylum Acidobacteria provide insight into the lifestyles of these microorganisms in soils.</title>
        <authorList>
            <person name="Ward N.L."/>
            <person name="Challacombe J.F."/>
            <person name="Janssen P.H."/>
            <person name="Henrissat B."/>
            <person name="Coutinho P.M."/>
            <person name="Wu M."/>
            <person name="Xie G."/>
            <person name="Haft D.H."/>
            <person name="Sait M."/>
            <person name="Badger J."/>
            <person name="Barabote R.D."/>
            <person name="Bradley B."/>
            <person name="Brettin T.S."/>
            <person name="Brinkac L.M."/>
            <person name="Bruce D."/>
            <person name="Creasy T."/>
            <person name="Daugherty S.C."/>
            <person name="Davidsen T.M."/>
            <person name="DeBoy R.T."/>
            <person name="Detter J.C."/>
            <person name="Dodson R.J."/>
            <person name="Durkin A.S."/>
            <person name="Ganapathy A."/>
            <person name="Gwinn-Giglio M."/>
            <person name="Han C.S."/>
            <person name="Khouri H."/>
            <person name="Kiss H."/>
            <person name="Kothari S.P."/>
            <person name="Madupu R."/>
            <person name="Nelson K.E."/>
            <person name="Nelson W.C."/>
            <person name="Paulsen I."/>
            <person name="Penn K."/>
            <person name="Ren Q."/>
            <person name="Rosovitz M.J."/>
            <person name="Selengut J.D."/>
            <person name="Shrivastava S."/>
            <person name="Sullivan S.A."/>
            <person name="Tapia R."/>
            <person name="Thompson L.S."/>
            <person name="Watkins K.L."/>
            <person name="Yang Q."/>
            <person name="Yu C."/>
            <person name="Zafar N."/>
            <person name="Zhou L."/>
            <person name="Kuske C.R."/>
        </authorList>
    </citation>
    <scope>NUCLEOTIDE SEQUENCE [LARGE SCALE GENOMIC DNA]</scope>
    <source>
        <strain>Ellin6076</strain>
    </source>
</reference>
<gene>
    <name evidence="1" type="primary">folD</name>
    <name type="ordered locus">Acid_4780</name>
</gene>
<protein>
    <recommendedName>
        <fullName evidence="1">Bifunctional protein FolD</fullName>
    </recommendedName>
    <domain>
        <recommendedName>
            <fullName evidence="1">Methylenetetrahydrofolate dehydrogenase</fullName>
            <ecNumber evidence="1">1.5.1.5</ecNumber>
        </recommendedName>
    </domain>
    <domain>
        <recommendedName>
            <fullName evidence="1">Methenyltetrahydrofolate cyclohydrolase</fullName>
            <ecNumber evidence="1">3.5.4.9</ecNumber>
        </recommendedName>
    </domain>
</protein>
<evidence type="ECO:0000255" key="1">
    <source>
        <dbReference type="HAMAP-Rule" id="MF_01576"/>
    </source>
</evidence>
<accession>Q01X76</accession>
<organism>
    <name type="scientific">Solibacter usitatus (strain Ellin6076)</name>
    <dbReference type="NCBI Taxonomy" id="234267"/>
    <lineage>
        <taxon>Bacteria</taxon>
        <taxon>Pseudomonadati</taxon>
        <taxon>Acidobacteriota</taxon>
        <taxon>Terriglobia</taxon>
        <taxon>Bryobacterales</taxon>
        <taxon>Solibacteraceae</taxon>
        <taxon>Candidatus Solibacter</taxon>
    </lineage>
</organism>
<dbReference type="EC" id="1.5.1.5" evidence="1"/>
<dbReference type="EC" id="3.5.4.9" evidence="1"/>
<dbReference type="EMBL" id="CP000473">
    <property type="protein sequence ID" value="ABJ85739.1"/>
    <property type="molecule type" value="Genomic_DNA"/>
</dbReference>
<dbReference type="SMR" id="Q01X76"/>
<dbReference type="FunCoup" id="Q01X76">
    <property type="interactions" value="552"/>
</dbReference>
<dbReference type="STRING" id="234267.Acid_4780"/>
<dbReference type="KEGG" id="sus:Acid_4780"/>
<dbReference type="eggNOG" id="COG0190">
    <property type="taxonomic scope" value="Bacteria"/>
</dbReference>
<dbReference type="HOGENOM" id="CLU_034045_2_1_0"/>
<dbReference type="InParanoid" id="Q01X76"/>
<dbReference type="OrthoDB" id="9803580at2"/>
<dbReference type="UniPathway" id="UPA00193"/>
<dbReference type="GO" id="GO:0005829">
    <property type="term" value="C:cytosol"/>
    <property type="evidence" value="ECO:0007669"/>
    <property type="project" value="TreeGrafter"/>
</dbReference>
<dbReference type="GO" id="GO:0004477">
    <property type="term" value="F:methenyltetrahydrofolate cyclohydrolase activity"/>
    <property type="evidence" value="ECO:0007669"/>
    <property type="project" value="UniProtKB-UniRule"/>
</dbReference>
<dbReference type="GO" id="GO:0004488">
    <property type="term" value="F:methylenetetrahydrofolate dehydrogenase (NADP+) activity"/>
    <property type="evidence" value="ECO:0007669"/>
    <property type="project" value="UniProtKB-UniRule"/>
</dbReference>
<dbReference type="GO" id="GO:0000105">
    <property type="term" value="P:L-histidine biosynthetic process"/>
    <property type="evidence" value="ECO:0007669"/>
    <property type="project" value="UniProtKB-KW"/>
</dbReference>
<dbReference type="GO" id="GO:0009086">
    <property type="term" value="P:methionine biosynthetic process"/>
    <property type="evidence" value="ECO:0007669"/>
    <property type="project" value="UniProtKB-KW"/>
</dbReference>
<dbReference type="GO" id="GO:0006164">
    <property type="term" value="P:purine nucleotide biosynthetic process"/>
    <property type="evidence" value="ECO:0007669"/>
    <property type="project" value="UniProtKB-KW"/>
</dbReference>
<dbReference type="GO" id="GO:0035999">
    <property type="term" value="P:tetrahydrofolate interconversion"/>
    <property type="evidence" value="ECO:0007669"/>
    <property type="project" value="UniProtKB-UniRule"/>
</dbReference>
<dbReference type="CDD" id="cd01080">
    <property type="entry name" value="NAD_bind_m-THF_DH_Cyclohyd"/>
    <property type="match status" value="1"/>
</dbReference>
<dbReference type="FunFam" id="3.40.50.720:FF:000006">
    <property type="entry name" value="Bifunctional protein FolD"/>
    <property type="match status" value="1"/>
</dbReference>
<dbReference type="FunFam" id="3.40.50.10860:FF:000005">
    <property type="entry name" value="C-1-tetrahydrofolate synthase, cytoplasmic, putative"/>
    <property type="match status" value="1"/>
</dbReference>
<dbReference type="Gene3D" id="3.40.50.10860">
    <property type="entry name" value="Leucine Dehydrogenase, chain A, domain 1"/>
    <property type="match status" value="1"/>
</dbReference>
<dbReference type="Gene3D" id="3.40.50.720">
    <property type="entry name" value="NAD(P)-binding Rossmann-like Domain"/>
    <property type="match status" value="1"/>
</dbReference>
<dbReference type="HAMAP" id="MF_01576">
    <property type="entry name" value="THF_DHG_CYH"/>
    <property type="match status" value="1"/>
</dbReference>
<dbReference type="InterPro" id="IPR046346">
    <property type="entry name" value="Aminoacid_DH-like_N_sf"/>
</dbReference>
<dbReference type="InterPro" id="IPR036291">
    <property type="entry name" value="NAD(P)-bd_dom_sf"/>
</dbReference>
<dbReference type="InterPro" id="IPR000672">
    <property type="entry name" value="THF_DH/CycHdrlase"/>
</dbReference>
<dbReference type="InterPro" id="IPR020630">
    <property type="entry name" value="THF_DH/CycHdrlase_cat_dom"/>
</dbReference>
<dbReference type="InterPro" id="IPR020631">
    <property type="entry name" value="THF_DH/CycHdrlase_NAD-bd_dom"/>
</dbReference>
<dbReference type="NCBIfam" id="NF010783">
    <property type="entry name" value="PRK14186.1"/>
    <property type="match status" value="1"/>
</dbReference>
<dbReference type="PANTHER" id="PTHR48099:SF5">
    <property type="entry name" value="C-1-TETRAHYDROFOLATE SYNTHASE, CYTOPLASMIC"/>
    <property type="match status" value="1"/>
</dbReference>
<dbReference type="PANTHER" id="PTHR48099">
    <property type="entry name" value="C-1-TETRAHYDROFOLATE SYNTHASE, CYTOPLASMIC-RELATED"/>
    <property type="match status" value="1"/>
</dbReference>
<dbReference type="Pfam" id="PF00763">
    <property type="entry name" value="THF_DHG_CYH"/>
    <property type="match status" value="1"/>
</dbReference>
<dbReference type="Pfam" id="PF02882">
    <property type="entry name" value="THF_DHG_CYH_C"/>
    <property type="match status" value="1"/>
</dbReference>
<dbReference type="PRINTS" id="PR00085">
    <property type="entry name" value="THFDHDRGNASE"/>
</dbReference>
<dbReference type="SUPFAM" id="SSF53223">
    <property type="entry name" value="Aminoacid dehydrogenase-like, N-terminal domain"/>
    <property type="match status" value="1"/>
</dbReference>
<dbReference type="SUPFAM" id="SSF51735">
    <property type="entry name" value="NAD(P)-binding Rossmann-fold domains"/>
    <property type="match status" value="1"/>
</dbReference>
<feature type="chain" id="PRO_0000305881" description="Bifunctional protein FolD">
    <location>
        <begin position="1"/>
        <end position="306"/>
    </location>
</feature>
<feature type="binding site" evidence="1">
    <location>
        <begin position="164"/>
        <end position="166"/>
    </location>
    <ligand>
        <name>NADP(+)</name>
        <dbReference type="ChEBI" id="CHEBI:58349"/>
    </ligand>
</feature>
<feature type="binding site" evidence="1">
    <location>
        <position position="189"/>
    </location>
    <ligand>
        <name>NADP(+)</name>
        <dbReference type="ChEBI" id="CHEBI:58349"/>
    </ligand>
</feature>
<feature type="binding site" evidence="1">
    <location>
        <position position="230"/>
    </location>
    <ligand>
        <name>NADP(+)</name>
        <dbReference type="ChEBI" id="CHEBI:58349"/>
    </ligand>
</feature>
<comment type="function">
    <text evidence="1">Catalyzes the oxidation of 5,10-methylenetetrahydrofolate to 5,10-methenyltetrahydrofolate and then the hydrolysis of 5,10-methenyltetrahydrofolate to 10-formyltetrahydrofolate.</text>
</comment>
<comment type="catalytic activity">
    <reaction evidence="1">
        <text>(6R)-5,10-methylene-5,6,7,8-tetrahydrofolate + NADP(+) = (6R)-5,10-methenyltetrahydrofolate + NADPH</text>
        <dbReference type="Rhea" id="RHEA:22812"/>
        <dbReference type="ChEBI" id="CHEBI:15636"/>
        <dbReference type="ChEBI" id="CHEBI:57455"/>
        <dbReference type="ChEBI" id="CHEBI:57783"/>
        <dbReference type="ChEBI" id="CHEBI:58349"/>
        <dbReference type="EC" id="1.5.1.5"/>
    </reaction>
</comment>
<comment type="catalytic activity">
    <reaction evidence="1">
        <text>(6R)-5,10-methenyltetrahydrofolate + H2O = (6R)-10-formyltetrahydrofolate + H(+)</text>
        <dbReference type="Rhea" id="RHEA:23700"/>
        <dbReference type="ChEBI" id="CHEBI:15377"/>
        <dbReference type="ChEBI" id="CHEBI:15378"/>
        <dbReference type="ChEBI" id="CHEBI:57455"/>
        <dbReference type="ChEBI" id="CHEBI:195366"/>
        <dbReference type="EC" id="3.5.4.9"/>
    </reaction>
</comment>
<comment type="pathway">
    <text evidence="1">One-carbon metabolism; tetrahydrofolate interconversion.</text>
</comment>
<comment type="subunit">
    <text evidence="1">Homodimer.</text>
</comment>
<comment type="similarity">
    <text evidence="1">Belongs to the tetrahydrofolate dehydrogenase/cyclohydrolase family.</text>
</comment>
<sequence>MPRILDGNRVRDEIKGELKPRIAALAAHGRPPGLAVVLVGNNPASEIYVRNKIKTCHDLGIYSESITPPDTISTEELLAIVQGLNARAEIDGILVQLPLPPQVDTKRILMAVSPAKDVDGFHPCNVGALVANLPAPRACTPAGIMELLKRGGIPIAGQRAVVVGRSDIVGKPVAMLLLHEHATVTICHSKTPDLKSLCREADILVAAIGRAAMITGEFIKPGATVIDVGTNHVADREKAARIYRNSPEKMANFDKRGNLLIGDVDPVGVVEKAGAYTPVPGGVGPLTIAMLMVNTVASAERRAGVC</sequence>
<name>FOLD_SOLUE</name>
<keyword id="KW-0028">Amino-acid biosynthesis</keyword>
<keyword id="KW-0368">Histidine biosynthesis</keyword>
<keyword id="KW-0378">Hydrolase</keyword>
<keyword id="KW-0486">Methionine biosynthesis</keyword>
<keyword id="KW-0511">Multifunctional enzyme</keyword>
<keyword id="KW-0521">NADP</keyword>
<keyword id="KW-0554">One-carbon metabolism</keyword>
<keyword id="KW-0560">Oxidoreductase</keyword>
<keyword id="KW-0658">Purine biosynthesis</keyword>
<proteinExistence type="inferred from homology"/>